<dbReference type="EC" id="2.7.7.6"/>
<dbReference type="EMBL" id="AB058956">
    <property type="protein sequence ID" value="BAB69431.1"/>
    <property type="molecule type" value="Genomic_DNA"/>
</dbReference>
<dbReference type="EMBL" id="AB058954">
    <property type="protein sequence ID" value="BAB69063.1"/>
    <property type="molecule type" value="mRNA"/>
</dbReference>
<dbReference type="EMBL" id="AJ416568">
    <property type="protein sequence ID" value="CAC95019.1"/>
    <property type="molecule type" value="mRNA"/>
</dbReference>
<dbReference type="RefSeq" id="NP_001289502.1">
    <property type="nucleotide sequence ID" value="NM_001302573.1"/>
</dbReference>
<dbReference type="SMR" id="Q93Y94"/>
<dbReference type="STRING" id="4096.Q93Y94"/>
<dbReference type="GeneID" id="104218451"/>
<dbReference type="KEGG" id="nsy:104218451"/>
<dbReference type="eggNOG" id="KOG1038">
    <property type="taxonomic scope" value="Eukaryota"/>
</dbReference>
<dbReference type="Proteomes" id="UP000189701">
    <property type="component" value="Unplaced"/>
</dbReference>
<dbReference type="GO" id="GO:0034245">
    <property type="term" value="C:mitochondrial DNA-directed RNA polymerase complex"/>
    <property type="evidence" value="ECO:0007669"/>
    <property type="project" value="TreeGrafter"/>
</dbReference>
<dbReference type="GO" id="GO:0005739">
    <property type="term" value="C:mitochondrion"/>
    <property type="evidence" value="ECO:0000314"/>
    <property type="project" value="UniProtKB"/>
</dbReference>
<dbReference type="GO" id="GO:0009536">
    <property type="term" value="C:plastid"/>
    <property type="evidence" value="ECO:0007669"/>
    <property type="project" value="GOC"/>
</dbReference>
<dbReference type="GO" id="GO:0003677">
    <property type="term" value="F:DNA binding"/>
    <property type="evidence" value="ECO:0007669"/>
    <property type="project" value="InterPro"/>
</dbReference>
<dbReference type="GO" id="GO:0003899">
    <property type="term" value="F:DNA-directed RNA polymerase activity"/>
    <property type="evidence" value="ECO:0007669"/>
    <property type="project" value="UniProtKB-EC"/>
</dbReference>
<dbReference type="GO" id="GO:0006390">
    <property type="term" value="P:mitochondrial transcription"/>
    <property type="evidence" value="ECO:0007669"/>
    <property type="project" value="TreeGrafter"/>
</dbReference>
<dbReference type="FunFam" id="1.10.1320.10:FF:000001">
    <property type="entry name" value="DNA-directed RNA polymerase"/>
    <property type="match status" value="1"/>
</dbReference>
<dbReference type="FunFam" id="1.10.150.20:FF:000027">
    <property type="entry name" value="DNA-directed RNA polymerase"/>
    <property type="match status" value="1"/>
</dbReference>
<dbReference type="FunFam" id="1.10.287.260:FF:000001">
    <property type="entry name" value="DNA-directed RNA polymerase"/>
    <property type="match status" value="1"/>
</dbReference>
<dbReference type="FunFam" id="1.10.287.280:FF:000001">
    <property type="entry name" value="DNA-directed RNA polymerase"/>
    <property type="match status" value="1"/>
</dbReference>
<dbReference type="Gene3D" id="1.10.287.260">
    <property type="match status" value="1"/>
</dbReference>
<dbReference type="Gene3D" id="1.10.287.280">
    <property type="match status" value="1"/>
</dbReference>
<dbReference type="Gene3D" id="1.10.150.20">
    <property type="entry name" value="5' to 3' exonuclease, C-terminal subdomain"/>
    <property type="match status" value="1"/>
</dbReference>
<dbReference type="Gene3D" id="1.10.1320.10">
    <property type="entry name" value="DNA-directed RNA polymerase, N-terminal domain"/>
    <property type="match status" value="1"/>
</dbReference>
<dbReference type="InterPro" id="IPR024075">
    <property type="entry name" value="DNA-dir_RNA_pol_helix_hairp_sf"/>
</dbReference>
<dbReference type="InterPro" id="IPR046950">
    <property type="entry name" value="DNA-dir_Rpol_C_phage-type"/>
</dbReference>
<dbReference type="InterPro" id="IPR002092">
    <property type="entry name" value="DNA-dir_Rpol_phage-type"/>
</dbReference>
<dbReference type="InterPro" id="IPR043502">
    <property type="entry name" value="DNA/RNA_pol_sf"/>
</dbReference>
<dbReference type="InterPro" id="IPR037159">
    <property type="entry name" value="RNA_POL_N_sf"/>
</dbReference>
<dbReference type="InterPro" id="IPR029262">
    <property type="entry name" value="RPOL_N"/>
</dbReference>
<dbReference type="PANTHER" id="PTHR10102:SF27">
    <property type="entry name" value="DNA-DIRECTED RNA POLYMERASE 1B, MITOCHONDRIAL"/>
    <property type="match status" value="1"/>
</dbReference>
<dbReference type="PANTHER" id="PTHR10102">
    <property type="entry name" value="DNA-DIRECTED RNA POLYMERASE, MITOCHONDRIAL"/>
    <property type="match status" value="1"/>
</dbReference>
<dbReference type="Pfam" id="PF00940">
    <property type="entry name" value="RNA_pol"/>
    <property type="match status" value="1"/>
</dbReference>
<dbReference type="Pfam" id="PF14700">
    <property type="entry name" value="RPOL_N"/>
    <property type="match status" value="1"/>
</dbReference>
<dbReference type="SMART" id="SM01311">
    <property type="entry name" value="RPOL_N"/>
    <property type="match status" value="1"/>
</dbReference>
<dbReference type="SUPFAM" id="SSF56672">
    <property type="entry name" value="DNA/RNA polymerases"/>
    <property type="match status" value="1"/>
</dbReference>
<dbReference type="PROSITE" id="PS00900">
    <property type="entry name" value="RNA_POL_PHAGE_1"/>
    <property type="match status" value="1"/>
</dbReference>
<dbReference type="PROSITE" id="PS00489">
    <property type="entry name" value="RNA_POL_PHAGE_2"/>
    <property type="match status" value="1"/>
</dbReference>
<keyword id="KW-0240">DNA-directed RNA polymerase</keyword>
<keyword id="KW-0496">Mitochondrion</keyword>
<keyword id="KW-0548">Nucleotidyltransferase</keyword>
<keyword id="KW-1185">Reference proteome</keyword>
<keyword id="KW-0804">Transcription</keyword>
<keyword id="KW-0808">Transferase</keyword>
<keyword id="KW-0809">Transit peptide</keyword>
<gene>
    <name type="primary">RPOT1</name>
    <name type="synonym">RPOT-A</name>
</gene>
<reference evidence="8" key="1">
    <citation type="journal article" date="2001" name="Gene">
        <title>Genomic organization and organ-specific expression of a nuclear gene encoding phage-type RNA polymerase in Nicotiana sylvestris.</title>
        <authorList>
            <person name="Kobayashi Y."/>
            <person name="Dokiya Y."/>
            <person name="Sugiura M."/>
            <person name="Niwa Y."/>
            <person name="Sugita M."/>
        </authorList>
    </citation>
    <scope>NUCLEOTIDE SEQUENCE [GENOMIC DNA / MRNA]</scope>
    <scope>SUBCELLULAR LOCATION</scope>
    <scope>TISSUE SPECIFICITY</scope>
</reference>
<reference evidence="8" key="2">
    <citation type="journal article" date="2002" name="Plant J.">
        <title>Six active phage-type RNA polymerase genes in Nicotiana tabacum.</title>
        <authorList>
            <person name="Hedtke B."/>
            <person name="Legen J."/>
            <person name="Weihe A."/>
            <person name="Herrmann R.G."/>
            <person name="Boerner T."/>
        </authorList>
    </citation>
    <scope>NUCLEOTIDE SEQUENCE [MRNA]</scope>
    <scope>SUBCELLULAR LOCATION</scope>
</reference>
<feature type="transit peptide" description="Mitochondrion" evidence="3">
    <location>
        <begin position="1"/>
        <end position="21"/>
    </location>
</feature>
<feature type="chain" id="PRO_0000031071" description="DNA-directed RNA polymerase 1, mitochondrial">
    <location>
        <begin position="22"/>
        <end position="1002"/>
    </location>
</feature>
<feature type="active site" evidence="1">
    <location>
        <position position="703"/>
    </location>
</feature>
<feature type="active site" evidence="1">
    <location>
        <position position="778"/>
    </location>
</feature>
<feature type="active site" evidence="1">
    <location>
        <position position="935"/>
    </location>
</feature>
<feature type="sequence conflict" description="In Ref. 2; CAC95019." evidence="8" ref="2">
    <original>Q</original>
    <variation>H</variation>
    <location>
        <position position="8"/>
    </location>
</feature>
<feature type="sequence conflict" description="In Ref. 1; BAB69063." evidence="8" ref="1">
    <original>I</original>
    <variation>T</variation>
    <location>
        <position position="129"/>
    </location>
</feature>
<feature type="sequence conflict" description="In Ref. 1; BAB69063." evidence="8" ref="1">
    <original>Y</original>
    <variation>C</variation>
    <location>
        <position position="238"/>
    </location>
</feature>
<feature type="sequence conflict" description="In Ref. 1; BAB69063." evidence="8" ref="1">
    <original>L</original>
    <variation>W</variation>
    <location>
        <position position="261"/>
    </location>
</feature>
<feature type="sequence conflict" description="In Ref. 2; CAC95019." evidence="8" ref="2">
    <original>V</original>
    <variation>L</variation>
    <location>
        <position position="321"/>
    </location>
</feature>
<protein>
    <recommendedName>
        <fullName>DNA-directed RNA polymerase 1, mitochondrial</fullName>
        <ecNumber>2.7.7.6</ecNumber>
    </recommendedName>
    <alternativeName>
        <fullName>NsRpoT-A</fullName>
    </alternativeName>
    <alternativeName>
        <fullName>T7 bacteriophage-type single subunit RNA polymerase 1</fullName>
    </alternativeName>
</protein>
<sequence length="1002" mass="113454">MWRYISKQAYSRKFRNSHDSALLGFSQYSSSFGKTRPLQCLCEESTTNPNLGLSQNSIFSRISRKVRHLEGICEESSKNPHLGLSQNSLFSSVKGDFRVCGKRGSGSLGFLRSYGSAAEAIASTSEEDIDEIQELIEEMNKENEALKTNLQPKQPKTIGGMGVGKYNLLRRRQIKVETEAWEEAAKEYQELLMDMCEQKLAPNLPYMKSLFLGWFEPLRDAIAAEQKLCDEGKNRGAYAPFFDQLPAEMMAVITMHKLMGLLMTGGGTGSARVVQAASHIGEAIEHEARIHRFLEKTKKSNALSGDLEDTPGDIMKERERVRKKVKILMKKQKLQQVRKIVKQQDDEKPWGQDNLVKVGCRLIQILMETAYIQPPNDQLDDCPPDIRPAFVHTLKTVETMKGSRRYGVIQCDPLVRKGLDKTARHMVIPYMPMLVPPQSWLGYDKGAYLFLPSYIMRTHGAKQQREAVKRVPKKQLEPVFQALDTLGNTKWRLNRKVLGIVDRIWASGGRLADLVDREDVPLPEEPDAEDEAQIRKWKWKVKGVKKENCERHSQRCDIELKLAVARKMKDEDGFYYPHNLDFRGRAYPMHPYLNHLGSDLCRGILEFAEGRPLGKSGLRWLKIHLANVYGGGVDKLSYEGRVAFSENHVEDIFDSAERPLEGKRWWLGAEDPFQCLATCINIAEALRSPSPETAISYMPIHQDGSCNGLQHYAALGRDTLGAAAVNLVAGDKPADVYSGIAARVLDIMKRDAAKDPANDPNVMRARLLINQVDRKLVKQTVMTSVYGVTYIGARDQIKRRLKERGVIEDDNELFAAACYAAKTTLTALGEMFEAARSIMSWLGDCAKIIAMENHPVRWTTPLGLPVVQPYRKLGRHLIKTSLQILTLQRETDKVMVKRQRTAFPPNFVHSLDGSHMMMTAIACKESGLSFAGVHDSYWTHASDVDQMNKILREKFVELYDAPILENLLESFQQSFPDLQFPPLPERGDFDLREVLESPYFFN</sequence>
<proteinExistence type="evidence at transcript level"/>
<evidence type="ECO:0000250" key="1"/>
<evidence type="ECO:0000250" key="2">
    <source>
        <dbReference type="UniProtKB" id="P00573"/>
    </source>
</evidence>
<evidence type="ECO:0000255" key="3"/>
<evidence type="ECO:0000255" key="4">
    <source>
        <dbReference type="PROSITE-ProRule" id="PRU10031"/>
    </source>
</evidence>
<evidence type="ECO:0000255" key="5">
    <source>
        <dbReference type="PROSITE-ProRule" id="PRU10032"/>
    </source>
</evidence>
<evidence type="ECO:0000269" key="6">
    <source>
    </source>
</evidence>
<evidence type="ECO:0000269" key="7">
    <source>
    </source>
</evidence>
<evidence type="ECO:0000305" key="8"/>
<evidence type="ECO:0000312" key="9">
    <source>
        <dbReference type="EMBL" id="BAB69431.1"/>
    </source>
</evidence>
<organism evidence="9">
    <name type="scientific">Nicotiana sylvestris</name>
    <name type="common">Wood tobacco</name>
    <name type="synonym">South American tobacco</name>
    <dbReference type="NCBI Taxonomy" id="4096"/>
    <lineage>
        <taxon>Eukaryota</taxon>
        <taxon>Viridiplantae</taxon>
        <taxon>Streptophyta</taxon>
        <taxon>Embryophyta</taxon>
        <taxon>Tracheophyta</taxon>
        <taxon>Spermatophyta</taxon>
        <taxon>Magnoliopsida</taxon>
        <taxon>eudicotyledons</taxon>
        <taxon>Gunneridae</taxon>
        <taxon>Pentapetalae</taxon>
        <taxon>asterids</taxon>
        <taxon>lamiids</taxon>
        <taxon>Solanales</taxon>
        <taxon>Solanaceae</taxon>
        <taxon>Nicotianoideae</taxon>
        <taxon>Nicotianeae</taxon>
        <taxon>Nicotiana</taxon>
    </lineage>
</organism>
<name>RPOT1_NICSY</name>
<comment type="function">
    <text evidence="2">DNA-dependent RNA polymerase catalyzes the transcription of DNA into RNA using the four ribonucleoside triphosphates as substrates.</text>
</comment>
<comment type="catalytic activity">
    <reaction evidence="4 5">
        <text>RNA(n) + a ribonucleoside 5'-triphosphate = RNA(n+1) + diphosphate</text>
        <dbReference type="Rhea" id="RHEA:21248"/>
        <dbReference type="Rhea" id="RHEA-COMP:14527"/>
        <dbReference type="Rhea" id="RHEA-COMP:17342"/>
        <dbReference type="ChEBI" id="CHEBI:33019"/>
        <dbReference type="ChEBI" id="CHEBI:61557"/>
        <dbReference type="ChEBI" id="CHEBI:140395"/>
        <dbReference type="EC" id="2.7.7.6"/>
    </reaction>
</comment>
<comment type="subcellular location">
    <subcellularLocation>
        <location evidence="6 7">Mitochondrion</location>
    </subcellularLocation>
</comment>
<comment type="tissue specificity">
    <text evidence="6">The highest levels of expression are detected in the mature leaves. The level of expression is lowest in the cotyledons.</text>
</comment>
<comment type="similarity">
    <text evidence="8">Belongs to the phage and mitochondrial RNA polymerase family.</text>
</comment>
<accession>Q93Y94</accession>
<accession>Q8L6K0</accession>
<accession>Q948R5</accession>